<feature type="chain" id="PRO_1000024970" description="Quinolinate synthase">
    <location>
        <begin position="1"/>
        <end position="357"/>
    </location>
</feature>
<feature type="binding site" evidence="1">
    <location>
        <position position="50"/>
    </location>
    <ligand>
        <name>iminosuccinate</name>
        <dbReference type="ChEBI" id="CHEBI:77875"/>
    </ligand>
</feature>
<feature type="binding site" evidence="1">
    <location>
        <position position="71"/>
    </location>
    <ligand>
        <name>iminosuccinate</name>
        <dbReference type="ChEBI" id="CHEBI:77875"/>
    </ligand>
</feature>
<feature type="binding site" evidence="1">
    <location>
        <position position="116"/>
    </location>
    <ligand>
        <name>[4Fe-4S] cluster</name>
        <dbReference type="ChEBI" id="CHEBI:49883"/>
    </ligand>
</feature>
<feature type="binding site" evidence="1">
    <location>
        <begin position="142"/>
        <end position="144"/>
    </location>
    <ligand>
        <name>iminosuccinate</name>
        <dbReference type="ChEBI" id="CHEBI:77875"/>
    </ligand>
</feature>
<feature type="binding site" evidence="1">
    <location>
        <position position="159"/>
    </location>
    <ligand>
        <name>iminosuccinate</name>
        <dbReference type="ChEBI" id="CHEBI:77875"/>
    </ligand>
</feature>
<feature type="binding site" evidence="1">
    <location>
        <position position="203"/>
    </location>
    <ligand>
        <name>[4Fe-4S] cluster</name>
        <dbReference type="ChEBI" id="CHEBI:49883"/>
    </ligand>
</feature>
<feature type="binding site" evidence="1">
    <location>
        <begin position="229"/>
        <end position="231"/>
    </location>
    <ligand>
        <name>iminosuccinate</name>
        <dbReference type="ChEBI" id="CHEBI:77875"/>
    </ligand>
</feature>
<feature type="binding site" evidence="1">
    <location>
        <position position="246"/>
    </location>
    <ligand>
        <name>iminosuccinate</name>
        <dbReference type="ChEBI" id="CHEBI:77875"/>
    </ligand>
</feature>
<feature type="binding site" evidence="1">
    <location>
        <position position="300"/>
    </location>
    <ligand>
        <name>[4Fe-4S] cluster</name>
        <dbReference type="ChEBI" id="CHEBI:49883"/>
    </ligand>
</feature>
<accession>A0KX39</accession>
<organism>
    <name type="scientific">Shewanella sp. (strain ANA-3)</name>
    <dbReference type="NCBI Taxonomy" id="94122"/>
    <lineage>
        <taxon>Bacteria</taxon>
        <taxon>Pseudomonadati</taxon>
        <taxon>Pseudomonadota</taxon>
        <taxon>Gammaproteobacteria</taxon>
        <taxon>Alteromonadales</taxon>
        <taxon>Shewanellaceae</taxon>
        <taxon>Shewanella</taxon>
    </lineage>
</organism>
<evidence type="ECO:0000255" key="1">
    <source>
        <dbReference type="HAMAP-Rule" id="MF_00567"/>
    </source>
</evidence>
<gene>
    <name evidence="1" type="primary">nadA</name>
    <name type="ordered locus">Shewana3_2128</name>
</gene>
<comment type="function">
    <text evidence="1">Catalyzes the condensation of iminoaspartate with dihydroxyacetone phosphate to form quinolinate.</text>
</comment>
<comment type="catalytic activity">
    <reaction evidence="1">
        <text>iminosuccinate + dihydroxyacetone phosphate = quinolinate + phosphate + 2 H2O + H(+)</text>
        <dbReference type="Rhea" id="RHEA:25888"/>
        <dbReference type="ChEBI" id="CHEBI:15377"/>
        <dbReference type="ChEBI" id="CHEBI:15378"/>
        <dbReference type="ChEBI" id="CHEBI:29959"/>
        <dbReference type="ChEBI" id="CHEBI:43474"/>
        <dbReference type="ChEBI" id="CHEBI:57642"/>
        <dbReference type="ChEBI" id="CHEBI:77875"/>
        <dbReference type="EC" id="2.5.1.72"/>
    </reaction>
    <physiologicalReaction direction="left-to-right" evidence="1">
        <dbReference type="Rhea" id="RHEA:25889"/>
    </physiologicalReaction>
</comment>
<comment type="cofactor">
    <cofactor evidence="1">
        <name>[4Fe-4S] cluster</name>
        <dbReference type="ChEBI" id="CHEBI:49883"/>
    </cofactor>
    <text evidence="1">Binds 1 [4Fe-4S] cluster per subunit.</text>
</comment>
<comment type="pathway">
    <text evidence="1">Cofactor biosynthesis; NAD(+) biosynthesis; quinolinate from iminoaspartate: step 1/1.</text>
</comment>
<comment type="subcellular location">
    <subcellularLocation>
        <location evidence="1">Cytoplasm</location>
    </subcellularLocation>
</comment>
<comment type="similarity">
    <text evidence="1">Belongs to the quinolinate synthase family. Type 1 subfamily.</text>
</comment>
<keyword id="KW-0004">4Fe-4S</keyword>
<keyword id="KW-0963">Cytoplasm</keyword>
<keyword id="KW-0408">Iron</keyword>
<keyword id="KW-0411">Iron-sulfur</keyword>
<keyword id="KW-0479">Metal-binding</keyword>
<keyword id="KW-0662">Pyridine nucleotide biosynthesis</keyword>
<keyword id="KW-0808">Transferase</keyword>
<reference key="1">
    <citation type="submission" date="2006-09" db="EMBL/GenBank/DDBJ databases">
        <title>Complete sequence of chromosome 1 of Shewanella sp. ANA-3.</title>
        <authorList>
            <person name="Copeland A."/>
            <person name="Lucas S."/>
            <person name="Lapidus A."/>
            <person name="Barry K."/>
            <person name="Detter J.C."/>
            <person name="Glavina del Rio T."/>
            <person name="Hammon N."/>
            <person name="Israni S."/>
            <person name="Dalin E."/>
            <person name="Tice H."/>
            <person name="Pitluck S."/>
            <person name="Chertkov O."/>
            <person name="Brettin T."/>
            <person name="Bruce D."/>
            <person name="Han C."/>
            <person name="Tapia R."/>
            <person name="Gilna P."/>
            <person name="Schmutz J."/>
            <person name="Larimer F."/>
            <person name="Land M."/>
            <person name="Hauser L."/>
            <person name="Kyrpides N."/>
            <person name="Kim E."/>
            <person name="Newman D."/>
            <person name="Salticov C."/>
            <person name="Konstantinidis K."/>
            <person name="Klappenback J."/>
            <person name="Tiedje J."/>
            <person name="Richardson P."/>
        </authorList>
    </citation>
    <scope>NUCLEOTIDE SEQUENCE [LARGE SCALE GENOMIC DNA]</scope>
    <source>
        <strain>ANA-3</strain>
    </source>
</reference>
<sequence length="357" mass="38789">MSPSPFAPTIETIDYPFPPKPIPLSDAEKADYKARIKQLLIEKDAVLVAHYYTDPEIQALAEETGGCVSDSLEMARFGRDHPAKTLIVAGVKFMGETAKILSPEKTILMPTLEATCSLDLGCPIDKFNAFCDAHPDHTVVVYANTSAAVKARADWVVTSSIALEIVEHLDSEGKKIIWGPDRHLGSYIAKQTGAEMLMWQGDCIVHDEFKANALRDLKRVYPDAAILVHPESPASVVAMADAVGSTSQLIKAAQTMANERFIVATDRGIFYKMQQAAPGKTLIEAPTGGNGATCKSCAHCPWMAMNGLKAIEASLSDSDKTTHEIFVDEDLRVKALIPLTRMLDFAKTLNMKVKGNA</sequence>
<dbReference type="EC" id="2.5.1.72" evidence="1"/>
<dbReference type="EMBL" id="CP000469">
    <property type="protein sequence ID" value="ABK48358.1"/>
    <property type="molecule type" value="Genomic_DNA"/>
</dbReference>
<dbReference type="RefSeq" id="WP_011717092.1">
    <property type="nucleotide sequence ID" value="NC_008577.1"/>
</dbReference>
<dbReference type="SMR" id="A0KX39"/>
<dbReference type="STRING" id="94122.Shewana3_2128"/>
<dbReference type="KEGG" id="shn:Shewana3_2128"/>
<dbReference type="eggNOG" id="COG0379">
    <property type="taxonomic scope" value="Bacteria"/>
</dbReference>
<dbReference type="HOGENOM" id="CLU_047382_1_0_6"/>
<dbReference type="OrthoDB" id="9801204at2"/>
<dbReference type="UniPathway" id="UPA00253">
    <property type="reaction ID" value="UER00327"/>
</dbReference>
<dbReference type="Proteomes" id="UP000002589">
    <property type="component" value="Chromosome"/>
</dbReference>
<dbReference type="GO" id="GO:0005829">
    <property type="term" value="C:cytosol"/>
    <property type="evidence" value="ECO:0007669"/>
    <property type="project" value="TreeGrafter"/>
</dbReference>
<dbReference type="GO" id="GO:0051539">
    <property type="term" value="F:4 iron, 4 sulfur cluster binding"/>
    <property type="evidence" value="ECO:0007669"/>
    <property type="project" value="UniProtKB-KW"/>
</dbReference>
<dbReference type="GO" id="GO:0046872">
    <property type="term" value="F:metal ion binding"/>
    <property type="evidence" value="ECO:0007669"/>
    <property type="project" value="UniProtKB-KW"/>
</dbReference>
<dbReference type="GO" id="GO:0008987">
    <property type="term" value="F:quinolinate synthetase A activity"/>
    <property type="evidence" value="ECO:0007669"/>
    <property type="project" value="UniProtKB-UniRule"/>
</dbReference>
<dbReference type="GO" id="GO:0034628">
    <property type="term" value="P:'de novo' NAD biosynthetic process from L-aspartate"/>
    <property type="evidence" value="ECO:0007669"/>
    <property type="project" value="TreeGrafter"/>
</dbReference>
<dbReference type="FunFam" id="3.40.50.10800:FF:000003">
    <property type="entry name" value="Quinolinate synthase A"/>
    <property type="match status" value="1"/>
</dbReference>
<dbReference type="Gene3D" id="3.40.50.10800">
    <property type="entry name" value="NadA-like"/>
    <property type="match status" value="3"/>
</dbReference>
<dbReference type="HAMAP" id="MF_00567">
    <property type="entry name" value="NadA_type1"/>
    <property type="match status" value="1"/>
</dbReference>
<dbReference type="InterPro" id="IPR003473">
    <property type="entry name" value="NadA"/>
</dbReference>
<dbReference type="InterPro" id="IPR036094">
    <property type="entry name" value="NadA_sf"/>
</dbReference>
<dbReference type="InterPro" id="IPR023513">
    <property type="entry name" value="Quinolinate_synth_A_type1"/>
</dbReference>
<dbReference type="NCBIfam" id="TIGR00550">
    <property type="entry name" value="nadA"/>
    <property type="match status" value="1"/>
</dbReference>
<dbReference type="NCBIfam" id="NF006877">
    <property type="entry name" value="PRK09375.1-1"/>
    <property type="match status" value="1"/>
</dbReference>
<dbReference type="NCBIfam" id="NF006878">
    <property type="entry name" value="PRK09375.1-2"/>
    <property type="match status" value="1"/>
</dbReference>
<dbReference type="PANTHER" id="PTHR30573:SF0">
    <property type="entry name" value="QUINOLINATE SYNTHASE, CHLOROPLASTIC"/>
    <property type="match status" value="1"/>
</dbReference>
<dbReference type="PANTHER" id="PTHR30573">
    <property type="entry name" value="QUINOLINATE SYNTHETASE A"/>
    <property type="match status" value="1"/>
</dbReference>
<dbReference type="Pfam" id="PF02445">
    <property type="entry name" value="NadA"/>
    <property type="match status" value="1"/>
</dbReference>
<dbReference type="SUPFAM" id="SSF142754">
    <property type="entry name" value="NadA-like"/>
    <property type="match status" value="1"/>
</dbReference>
<name>NADA_SHESA</name>
<proteinExistence type="inferred from homology"/>
<protein>
    <recommendedName>
        <fullName evidence="1">Quinolinate synthase</fullName>
        <ecNumber evidence="1">2.5.1.72</ecNumber>
    </recommendedName>
</protein>